<feature type="chain" id="PRO_0000422675" description="Putative zinc metalloprotease Rip2">
    <location>
        <begin position="1"/>
        <end position="259"/>
    </location>
</feature>
<feature type="transmembrane region" description="Helical" evidence="2">
    <location>
        <begin position="14"/>
        <end position="34"/>
    </location>
</feature>
<feature type="transmembrane region" description="Helical" evidence="2">
    <location>
        <begin position="39"/>
        <end position="59"/>
    </location>
</feature>
<feature type="transmembrane region" description="Helical" evidence="2">
    <location>
        <begin position="97"/>
        <end position="117"/>
    </location>
</feature>
<feature type="transmembrane region" description="Helical" evidence="2">
    <location>
        <begin position="128"/>
        <end position="148"/>
    </location>
</feature>
<feature type="transmembrane region" description="Helical" evidence="2">
    <location>
        <begin position="156"/>
        <end position="176"/>
    </location>
</feature>
<feature type="transmembrane region" description="Helical" evidence="2">
    <location>
        <begin position="215"/>
        <end position="235"/>
    </location>
</feature>
<feature type="active site" evidence="1">
    <location>
        <position position="61"/>
    </location>
</feature>
<feature type="binding site" evidence="1">
    <location>
        <position position="60"/>
    </location>
    <ligand>
        <name>Zn(2+)</name>
        <dbReference type="ChEBI" id="CHEBI:29105"/>
        <note>catalytic</note>
    </ligand>
</feature>
<feature type="binding site" evidence="1">
    <location>
        <position position="64"/>
    </location>
    <ligand>
        <name>Zn(2+)</name>
        <dbReference type="ChEBI" id="CHEBI:29105"/>
        <note>catalytic</note>
    </ligand>
</feature>
<gene>
    <name type="primary">rip2</name>
    <name type="ordered locus">ERDMAN_0399</name>
</gene>
<protein>
    <recommendedName>
        <fullName>Putative zinc metalloprotease Rip2</fullName>
    </recommendedName>
</protein>
<organism>
    <name type="scientific">Mycobacterium tuberculosis (strain ATCC 35801 / TMC 107 / Erdman)</name>
    <dbReference type="NCBI Taxonomy" id="652616"/>
    <lineage>
        <taxon>Bacteria</taxon>
        <taxon>Bacillati</taxon>
        <taxon>Actinomycetota</taxon>
        <taxon>Actinomycetes</taxon>
        <taxon>Mycobacteriales</taxon>
        <taxon>Mycobacteriaceae</taxon>
        <taxon>Mycobacterium</taxon>
        <taxon>Mycobacterium tuberculosis complex</taxon>
    </lineage>
</organism>
<dbReference type="EMBL" id="AP012340">
    <property type="protein sequence ID" value="BAL64215.1"/>
    <property type="molecule type" value="Genomic_DNA"/>
</dbReference>
<dbReference type="RefSeq" id="WP_003900129.1">
    <property type="nucleotide sequence ID" value="NZ_KK339487.1"/>
</dbReference>
<dbReference type="KEGG" id="mtn:ERDMAN_0399"/>
<dbReference type="PATRIC" id="fig|652616.3.peg.403"/>
<dbReference type="HOGENOM" id="CLU_066211_0_0_11"/>
<dbReference type="GO" id="GO:0005886">
    <property type="term" value="C:plasma membrane"/>
    <property type="evidence" value="ECO:0007669"/>
    <property type="project" value="UniProtKB-SubCell"/>
</dbReference>
<dbReference type="GO" id="GO:0046872">
    <property type="term" value="F:metal ion binding"/>
    <property type="evidence" value="ECO:0007669"/>
    <property type="project" value="UniProtKB-KW"/>
</dbReference>
<dbReference type="GO" id="GO:0008237">
    <property type="term" value="F:metallopeptidase activity"/>
    <property type="evidence" value="ECO:0007669"/>
    <property type="project" value="UniProtKB-KW"/>
</dbReference>
<dbReference type="GO" id="GO:0006508">
    <property type="term" value="P:proteolysis"/>
    <property type="evidence" value="ECO:0007669"/>
    <property type="project" value="UniProtKB-KW"/>
</dbReference>
<dbReference type="CDD" id="cd06158">
    <property type="entry name" value="S2P-M50_like_1"/>
    <property type="match status" value="1"/>
</dbReference>
<dbReference type="InterPro" id="IPR052348">
    <property type="entry name" value="Metallopeptidase_M50B"/>
</dbReference>
<dbReference type="InterPro" id="IPR044537">
    <property type="entry name" value="S2P-M50-like"/>
</dbReference>
<dbReference type="PANTHER" id="PTHR35864">
    <property type="entry name" value="ZINC METALLOPROTEASE MJ0611-RELATED"/>
    <property type="match status" value="1"/>
</dbReference>
<dbReference type="PANTHER" id="PTHR35864:SF1">
    <property type="entry name" value="ZINC METALLOPROTEASE YWHC-RELATED"/>
    <property type="match status" value="1"/>
</dbReference>
<keyword id="KW-1003">Cell membrane</keyword>
<keyword id="KW-0378">Hydrolase</keyword>
<keyword id="KW-0472">Membrane</keyword>
<keyword id="KW-0479">Metal-binding</keyword>
<keyword id="KW-0482">Metalloprotease</keyword>
<keyword id="KW-0645">Protease</keyword>
<keyword id="KW-0812">Transmembrane</keyword>
<keyword id="KW-1133">Transmembrane helix</keyword>
<keyword id="KW-0862">Zinc</keyword>
<accession>H8EVJ1</accession>
<reference key="1">
    <citation type="journal article" date="2012" name="J. Bacteriol.">
        <title>Complete annotated genome sequence of Mycobacterium tuberculosis Erdman.</title>
        <authorList>
            <person name="Miyoshi-Akiyama T."/>
            <person name="Matsumura K."/>
            <person name="Iwai H."/>
            <person name="Funatogawa K."/>
            <person name="Kirikae T."/>
        </authorList>
    </citation>
    <scope>NUCLEOTIDE SEQUENCE [LARGE SCALE GENOMIC DNA]</scope>
    <source>
        <strain>ATCC 35801 / TMC 107 / Erdman</strain>
    </source>
</reference>
<reference key="2">
    <citation type="journal article" date="2010" name="Mol. Microbiol.">
        <title>M. tuberculosis intramembrane protease Rip1 controls transcription through three anti-sigma factor substrates.</title>
        <authorList>
            <person name="Sklar J.G."/>
            <person name="Makinoshima H."/>
            <person name="Schneider J.S."/>
            <person name="Glickman M.S."/>
        </authorList>
    </citation>
    <scope>DISRUPTION PHENOTYPE</scope>
    <source>
        <strain>ATCC 35801 / TMC 107 / Erdman</strain>
    </source>
</reference>
<sequence>MSETGQRESVRPSPIFLGLLGLTAVGGALAWLAGETVQPLAYAGVFVMVIAGWLVSLCLHEFGHAFTAWRFGDHDVAVRGYLTLDPRRYSHPMLSLGLPMLFIALGGIGLPGAAVYVHTWFMTTARRTLVSLAGPTVNLALAMLLLAATRLLFDPIHAVLWAGVAFLAFLQLTALVLNLLPIPGLDGYAALEPHLRPETQRALAPAKQFALVFRLVLFLAPTLNGWFFGVVYWLFDLSGVSHRLAAAGSVLARFWSIWF</sequence>
<name>RIP2_MYCTE</name>
<comment type="cofactor">
    <cofactor evidence="1">
        <name>Zn(2+)</name>
        <dbReference type="ChEBI" id="CHEBI:29105"/>
    </cofactor>
    <text evidence="1">Binds 1 zinc ion per subunit.</text>
</comment>
<comment type="subcellular location">
    <subcellularLocation>
        <location evidence="4">Cell membrane</location>
        <topology evidence="4">Multi-pass membrane protein</topology>
    </subcellularLocation>
</comment>
<comment type="disruption phenotype">
    <text evidence="3">Not essential. No effect on processing of anti-sigma factors RsdA, RskA, RslA or RsmA.</text>
</comment>
<comment type="similarity">
    <text evidence="4">Belongs to the peptidase M50B family.</text>
</comment>
<proteinExistence type="inferred from homology"/>
<evidence type="ECO:0000250" key="1"/>
<evidence type="ECO:0000255" key="2"/>
<evidence type="ECO:0000269" key="3">
    <source>
    </source>
</evidence>
<evidence type="ECO:0000305" key="4"/>